<protein>
    <recommendedName>
        <fullName evidence="1">Chromosomal replication initiator protein DnaA</fullName>
    </recommendedName>
</protein>
<reference key="1">
    <citation type="journal article" date="2009" name="PLoS Genet.">
        <title>Adaptations to submarine hydrothermal environments exemplified by the genome of Nautilia profundicola.</title>
        <authorList>
            <person name="Campbell B.J."/>
            <person name="Smith J.L."/>
            <person name="Hanson T.E."/>
            <person name="Klotz M.G."/>
            <person name="Stein L.Y."/>
            <person name="Lee C.K."/>
            <person name="Wu D."/>
            <person name="Robinson J.M."/>
            <person name="Khouri H.M."/>
            <person name="Eisen J.A."/>
            <person name="Cary S.C."/>
        </authorList>
    </citation>
    <scope>NUCLEOTIDE SEQUENCE [LARGE SCALE GENOMIC DNA]</scope>
    <source>
        <strain>ATCC BAA-1463 / DSM 18972 / AmH</strain>
    </source>
</reference>
<evidence type="ECO:0000255" key="1">
    <source>
        <dbReference type="HAMAP-Rule" id="MF_00377"/>
    </source>
</evidence>
<gene>
    <name evidence="1" type="primary">dnaA</name>
    <name type="ordered locus">NAMH_0001</name>
</gene>
<organism>
    <name type="scientific">Nautilia profundicola (strain ATCC BAA-1463 / DSM 18972 / AmH)</name>
    <dbReference type="NCBI Taxonomy" id="598659"/>
    <lineage>
        <taxon>Bacteria</taxon>
        <taxon>Pseudomonadati</taxon>
        <taxon>Campylobacterota</taxon>
        <taxon>Epsilonproteobacteria</taxon>
        <taxon>Nautiliales</taxon>
        <taxon>Nautiliaceae</taxon>
        <taxon>Nautilia</taxon>
    </lineage>
</organism>
<comment type="function">
    <text evidence="1">Plays an essential role in the initiation and regulation of chromosomal replication. ATP-DnaA binds to the origin of replication (oriC) to initiate formation of the DNA replication initiation complex once per cell cycle. Binds the DnaA box (a 9 base pair repeat at the origin) and separates the double-stranded (ds)DNA. Forms a right-handed helical filament on oriC DNA; dsDNA binds to the exterior of the filament while single-stranded (ss)DNA is stabiized in the filament's interior. The ATP-DnaA-oriC complex binds and stabilizes one strand of the AT-rich DNA unwinding element (DUE), permitting loading of DNA polymerase. After initiation quickly degrades to an ADP-DnaA complex that is not apt for DNA replication. Binds acidic phospholipids.</text>
</comment>
<comment type="subunit">
    <text evidence="1">Oligomerizes as a right-handed, spiral filament on DNA at oriC.</text>
</comment>
<comment type="subcellular location">
    <subcellularLocation>
        <location evidence="1">Cytoplasm</location>
    </subcellularLocation>
</comment>
<comment type="domain">
    <text evidence="1">Domain I is involved in oligomerization and binding regulators, domain II is flexibile and of varying length in different bacteria, domain III forms the AAA+ region, while domain IV binds dsDNA.</text>
</comment>
<comment type="similarity">
    <text evidence="1">Belongs to the DnaA family.</text>
</comment>
<proteinExistence type="inferred from homology"/>
<name>DNAA_NAUPA</name>
<feature type="chain" id="PRO_1000189804" description="Chromosomal replication initiator protein DnaA">
    <location>
        <begin position="1"/>
        <end position="436"/>
    </location>
</feature>
<feature type="region of interest" description="Domain I, interacts with DnaA modulators" evidence="1">
    <location>
        <begin position="1"/>
        <end position="69"/>
    </location>
</feature>
<feature type="region of interest" description="Domain II" evidence="1">
    <location>
        <begin position="69"/>
        <end position="97"/>
    </location>
</feature>
<feature type="region of interest" description="Domain III, AAA+ region" evidence="1">
    <location>
        <begin position="98"/>
        <end position="311"/>
    </location>
</feature>
<feature type="region of interest" description="Domain IV, binds dsDNA" evidence="1">
    <location>
        <begin position="312"/>
        <end position="436"/>
    </location>
</feature>
<feature type="binding site" evidence="1">
    <location>
        <position position="142"/>
    </location>
    <ligand>
        <name>ATP</name>
        <dbReference type="ChEBI" id="CHEBI:30616"/>
    </ligand>
</feature>
<feature type="binding site" evidence="1">
    <location>
        <position position="144"/>
    </location>
    <ligand>
        <name>ATP</name>
        <dbReference type="ChEBI" id="CHEBI:30616"/>
    </ligand>
</feature>
<feature type="binding site" evidence="1">
    <location>
        <position position="145"/>
    </location>
    <ligand>
        <name>ATP</name>
        <dbReference type="ChEBI" id="CHEBI:30616"/>
    </ligand>
</feature>
<feature type="binding site" evidence="1">
    <location>
        <position position="146"/>
    </location>
    <ligand>
        <name>ATP</name>
        <dbReference type="ChEBI" id="CHEBI:30616"/>
    </ligand>
</feature>
<keyword id="KW-0067">ATP-binding</keyword>
<keyword id="KW-0963">Cytoplasm</keyword>
<keyword id="KW-0235">DNA replication</keyword>
<keyword id="KW-0238">DNA-binding</keyword>
<keyword id="KW-0446">Lipid-binding</keyword>
<keyword id="KW-0547">Nucleotide-binding</keyword>
<dbReference type="EMBL" id="CP001279">
    <property type="protein sequence ID" value="ACM92616.1"/>
    <property type="molecule type" value="Genomic_DNA"/>
</dbReference>
<dbReference type="RefSeq" id="WP_012663987.1">
    <property type="nucleotide sequence ID" value="NC_012115.1"/>
</dbReference>
<dbReference type="SMR" id="B9L735"/>
<dbReference type="STRING" id="598659.NAMH_0001"/>
<dbReference type="KEGG" id="nam:NAMH_0001"/>
<dbReference type="eggNOG" id="COG0593">
    <property type="taxonomic scope" value="Bacteria"/>
</dbReference>
<dbReference type="HOGENOM" id="CLU_026910_3_2_7"/>
<dbReference type="OrthoDB" id="9807019at2"/>
<dbReference type="Proteomes" id="UP000000448">
    <property type="component" value="Chromosome"/>
</dbReference>
<dbReference type="GO" id="GO:0005737">
    <property type="term" value="C:cytoplasm"/>
    <property type="evidence" value="ECO:0007669"/>
    <property type="project" value="UniProtKB-SubCell"/>
</dbReference>
<dbReference type="GO" id="GO:0005886">
    <property type="term" value="C:plasma membrane"/>
    <property type="evidence" value="ECO:0007669"/>
    <property type="project" value="TreeGrafter"/>
</dbReference>
<dbReference type="GO" id="GO:0005524">
    <property type="term" value="F:ATP binding"/>
    <property type="evidence" value="ECO:0007669"/>
    <property type="project" value="UniProtKB-UniRule"/>
</dbReference>
<dbReference type="GO" id="GO:0016887">
    <property type="term" value="F:ATP hydrolysis activity"/>
    <property type="evidence" value="ECO:0007669"/>
    <property type="project" value="InterPro"/>
</dbReference>
<dbReference type="GO" id="GO:0003688">
    <property type="term" value="F:DNA replication origin binding"/>
    <property type="evidence" value="ECO:0007669"/>
    <property type="project" value="UniProtKB-UniRule"/>
</dbReference>
<dbReference type="GO" id="GO:0008289">
    <property type="term" value="F:lipid binding"/>
    <property type="evidence" value="ECO:0007669"/>
    <property type="project" value="UniProtKB-KW"/>
</dbReference>
<dbReference type="GO" id="GO:0006270">
    <property type="term" value="P:DNA replication initiation"/>
    <property type="evidence" value="ECO:0007669"/>
    <property type="project" value="UniProtKB-UniRule"/>
</dbReference>
<dbReference type="GO" id="GO:0006275">
    <property type="term" value="P:regulation of DNA replication"/>
    <property type="evidence" value="ECO:0007669"/>
    <property type="project" value="UniProtKB-UniRule"/>
</dbReference>
<dbReference type="CDD" id="cd00009">
    <property type="entry name" value="AAA"/>
    <property type="match status" value="1"/>
</dbReference>
<dbReference type="CDD" id="cd06571">
    <property type="entry name" value="Bac_DnaA_C"/>
    <property type="match status" value="1"/>
</dbReference>
<dbReference type="FunFam" id="3.40.50.300:FF:000668">
    <property type="entry name" value="Chromosomal replication initiator protein DnaA"/>
    <property type="match status" value="1"/>
</dbReference>
<dbReference type="Gene3D" id="1.10.1750.10">
    <property type="match status" value="1"/>
</dbReference>
<dbReference type="Gene3D" id="1.10.8.60">
    <property type="match status" value="1"/>
</dbReference>
<dbReference type="Gene3D" id="3.30.300.180">
    <property type="match status" value="1"/>
</dbReference>
<dbReference type="Gene3D" id="3.40.50.300">
    <property type="entry name" value="P-loop containing nucleotide triphosphate hydrolases"/>
    <property type="match status" value="1"/>
</dbReference>
<dbReference type="HAMAP" id="MF_00377">
    <property type="entry name" value="DnaA_bact"/>
    <property type="match status" value="1"/>
</dbReference>
<dbReference type="InterPro" id="IPR003593">
    <property type="entry name" value="AAA+_ATPase"/>
</dbReference>
<dbReference type="InterPro" id="IPR001957">
    <property type="entry name" value="Chromosome_initiator_DnaA"/>
</dbReference>
<dbReference type="InterPro" id="IPR020591">
    <property type="entry name" value="Chromosome_initiator_DnaA-like"/>
</dbReference>
<dbReference type="InterPro" id="IPR013159">
    <property type="entry name" value="DnaA_C"/>
</dbReference>
<dbReference type="InterPro" id="IPR013317">
    <property type="entry name" value="DnaA_dom"/>
</dbReference>
<dbReference type="InterPro" id="IPR024633">
    <property type="entry name" value="DnaA_N_dom"/>
</dbReference>
<dbReference type="InterPro" id="IPR038454">
    <property type="entry name" value="DnaA_N_sf"/>
</dbReference>
<dbReference type="InterPro" id="IPR027417">
    <property type="entry name" value="P-loop_NTPase"/>
</dbReference>
<dbReference type="InterPro" id="IPR010921">
    <property type="entry name" value="Trp_repressor/repl_initiator"/>
</dbReference>
<dbReference type="NCBIfam" id="TIGR00362">
    <property type="entry name" value="DnaA"/>
    <property type="match status" value="1"/>
</dbReference>
<dbReference type="PANTHER" id="PTHR30050">
    <property type="entry name" value="CHROMOSOMAL REPLICATION INITIATOR PROTEIN DNAA"/>
    <property type="match status" value="1"/>
</dbReference>
<dbReference type="PANTHER" id="PTHR30050:SF2">
    <property type="entry name" value="CHROMOSOMAL REPLICATION INITIATOR PROTEIN DNAA"/>
    <property type="match status" value="1"/>
</dbReference>
<dbReference type="Pfam" id="PF00308">
    <property type="entry name" value="Bac_DnaA"/>
    <property type="match status" value="1"/>
</dbReference>
<dbReference type="Pfam" id="PF08299">
    <property type="entry name" value="Bac_DnaA_C"/>
    <property type="match status" value="1"/>
</dbReference>
<dbReference type="Pfam" id="PF11638">
    <property type="entry name" value="DnaA_N"/>
    <property type="match status" value="1"/>
</dbReference>
<dbReference type="PRINTS" id="PR00051">
    <property type="entry name" value="DNAA"/>
</dbReference>
<dbReference type="SMART" id="SM00382">
    <property type="entry name" value="AAA"/>
    <property type="match status" value="1"/>
</dbReference>
<dbReference type="SMART" id="SM00760">
    <property type="entry name" value="Bac_DnaA_C"/>
    <property type="match status" value="1"/>
</dbReference>
<dbReference type="SUPFAM" id="SSF52540">
    <property type="entry name" value="P-loop containing nucleoside triphosphate hydrolases"/>
    <property type="match status" value="1"/>
</dbReference>
<dbReference type="SUPFAM" id="SSF48295">
    <property type="entry name" value="TrpR-like"/>
    <property type="match status" value="1"/>
</dbReference>
<sequence length="436" mass="50491">MSIFTKIKKSLKSENLVNYNKFIKNLEFDEKNSTSTHLIIKAPNIFIANFVKRKYLNKISELYEKETGIKPKIDIVTKEISHRPLTIEEIIEPTTPSVLIPEYTFESFIVGPSNQFAYTAAKSVAENPGKNYNPLFIYGGVGLGKTHLLQAIGNYLKSSLNVLYVTSEQFMNEFTENIRMKTPERFHEKYRNCDVLLIDDVQFFAGKERTQEEFFHTFNELYNQKKQICLTADRPPKKLYDLVDRLRSRFEAGLIVDIQPPELETKIEIIRKKCELNGIYLPEEIIEYIATKLDSNIREIEGMITKINAMSKILGISEITLDFAKQALKEHIKDKKEVITLEDIIKLIAKEFNIKPSEIVSKSRNKNIVAARRCAIYLAREFTKESTPIIAKYFGLRDHSAVSHAIKSFNKKLKEDSEFRIKIEELKNKIQIKKSE</sequence>
<accession>B9L735</accession>